<gene>
    <name type="primary">gag</name>
</gene>
<organismHost>
    <name type="scientific">Homo sapiens</name>
    <name type="common">Human</name>
    <dbReference type="NCBI Taxonomy" id="9606"/>
</organismHost>
<reference key="1">
    <citation type="journal article" date="1996" name="AIDS Res. Hum. Retroviruses">
        <title>Full-length sequence of an ethiopian human immunodeficiency virus type 1 (HIV-1) isolate of genetic subtype C.</title>
        <authorList>
            <person name="Salminen M.O."/>
            <person name="Johansson B."/>
            <person name="Sonnerborg A."/>
            <person name="Ayehunie S."/>
            <person name="Gotte D."/>
            <person name="Leinikki P."/>
            <person name="Burke D.S."/>
            <person name="McCutchan F.E."/>
        </authorList>
    </citation>
    <scope>NUCLEOTIDE SEQUENCE [GENOMIC DNA]</scope>
</reference>
<dbReference type="EMBL" id="U46016">
    <property type="protein sequence ID" value="AAB36500.1"/>
    <property type="molecule type" value="Genomic_DNA"/>
</dbReference>
<dbReference type="SMR" id="Q75001"/>
<dbReference type="PRO" id="PR:Q75001"/>
<dbReference type="Proteomes" id="UP000007694">
    <property type="component" value="Segment"/>
</dbReference>
<dbReference type="GO" id="GO:0042025">
    <property type="term" value="C:host cell nucleus"/>
    <property type="evidence" value="ECO:0007669"/>
    <property type="project" value="UniProtKB-SubCell"/>
</dbReference>
<dbReference type="GO" id="GO:0020002">
    <property type="term" value="C:host cell plasma membrane"/>
    <property type="evidence" value="ECO:0007669"/>
    <property type="project" value="UniProtKB-SubCell"/>
</dbReference>
<dbReference type="GO" id="GO:0072494">
    <property type="term" value="C:host multivesicular body"/>
    <property type="evidence" value="ECO:0007669"/>
    <property type="project" value="UniProtKB-SubCell"/>
</dbReference>
<dbReference type="GO" id="GO:0016020">
    <property type="term" value="C:membrane"/>
    <property type="evidence" value="ECO:0007669"/>
    <property type="project" value="UniProtKB-KW"/>
</dbReference>
<dbReference type="GO" id="GO:0019013">
    <property type="term" value="C:viral nucleocapsid"/>
    <property type="evidence" value="ECO:0007669"/>
    <property type="project" value="UniProtKB-KW"/>
</dbReference>
<dbReference type="GO" id="GO:0055036">
    <property type="term" value="C:virion membrane"/>
    <property type="evidence" value="ECO:0007669"/>
    <property type="project" value="UniProtKB-SubCell"/>
</dbReference>
<dbReference type="GO" id="GO:0003723">
    <property type="term" value="F:RNA binding"/>
    <property type="evidence" value="ECO:0007669"/>
    <property type="project" value="UniProtKB-KW"/>
</dbReference>
<dbReference type="GO" id="GO:0005198">
    <property type="term" value="F:structural molecule activity"/>
    <property type="evidence" value="ECO:0007669"/>
    <property type="project" value="InterPro"/>
</dbReference>
<dbReference type="GO" id="GO:0008270">
    <property type="term" value="F:zinc ion binding"/>
    <property type="evidence" value="ECO:0007669"/>
    <property type="project" value="UniProtKB-KW"/>
</dbReference>
<dbReference type="GO" id="GO:0039702">
    <property type="term" value="P:viral budding via host ESCRT complex"/>
    <property type="evidence" value="ECO:0007669"/>
    <property type="project" value="UniProtKB-KW"/>
</dbReference>
<dbReference type="GO" id="GO:0075523">
    <property type="term" value="P:viral translational frameshifting"/>
    <property type="evidence" value="ECO:0007669"/>
    <property type="project" value="UniProtKB-KW"/>
</dbReference>
<dbReference type="FunFam" id="1.10.1200.30:FF:000001">
    <property type="entry name" value="Gag polyprotein"/>
    <property type="match status" value="1"/>
</dbReference>
<dbReference type="FunFam" id="1.10.375.10:FF:000001">
    <property type="entry name" value="Gag polyprotein"/>
    <property type="match status" value="1"/>
</dbReference>
<dbReference type="FunFam" id="4.10.60.10:FF:000001">
    <property type="entry name" value="Gag polyprotein"/>
    <property type="match status" value="1"/>
</dbReference>
<dbReference type="Gene3D" id="1.10.1200.30">
    <property type="match status" value="1"/>
</dbReference>
<dbReference type="Gene3D" id="6.10.250.390">
    <property type="match status" value="1"/>
</dbReference>
<dbReference type="Gene3D" id="1.10.375.10">
    <property type="entry name" value="Human Immunodeficiency Virus Type 1 Capsid Protein"/>
    <property type="match status" value="1"/>
</dbReference>
<dbReference type="Gene3D" id="1.10.150.90">
    <property type="entry name" value="Immunodeficiency lentiviruses, gag gene matrix protein p17"/>
    <property type="match status" value="1"/>
</dbReference>
<dbReference type="Gene3D" id="1.20.5.760">
    <property type="entry name" value="Single helix bin"/>
    <property type="match status" value="1"/>
</dbReference>
<dbReference type="Gene3D" id="4.10.60.10">
    <property type="entry name" value="Zinc finger, CCHC-type"/>
    <property type="match status" value="1"/>
</dbReference>
<dbReference type="InterPro" id="IPR045345">
    <property type="entry name" value="Gag_p24_C"/>
</dbReference>
<dbReference type="InterPro" id="IPR014817">
    <property type="entry name" value="Gag_p6"/>
</dbReference>
<dbReference type="InterPro" id="IPR000071">
    <property type="entry name" value="Lentvrl_matrix_N"/>
</dbReference>
<dbReference type="InterPro" id="IPR012344">
    <property type="entry name" value="Matrix_HIV/RSV_N"/>
</dbReference>
<dbReference type="InterPro" id="IPR050195">
    <property type="entry name" value="Primate_lentivir_Gag_pol-like"/>
</dbReference>
<dbReference type="InterPro" id="IPR008916">
    <property type="entry name" value="Retrov_capsid_C"/>
</dbReference>
<dbReference type="InterPro" id="IPR008919">
    <property type="entry name" value="Retrov_capsid_N"/>
</dbReference>
<dbReference type="InterPro" id="IPR010999">
    <property type="entry name" value="Retrovr_matrix"/>
</dbReference>
<dbReference type="InterPro" id="IPR001878">
    <property type="entry name" value="Znf_CCHC"/>
</dbReference>
<dbReference type="InterPro" id="IPR036875">
    <property type="entry name" value="Znf_CCHC_sf"/>
</dbReference>
<dbReference type="PANTHER" id="PTHR40389:SF4">
    <property type="match status" value="1"/>
</dbReference>
<dbReference type="PANTHER" id="PTHR40389">
    <property type="entry name" value="ENDOGENOUS RETROVIRUS GROUP K MEMBER 24 GAG POLYPROTEIN-RELATED"/>
    <property type="match status" value="1"/>
</dbReference>
<dbReference type="Pfam" id="PF00540">
    <property type="entry name" value="Gag_p17"/>
    <property type="match status" value="1"/>
</dbReference>
<dbReference type="Pfam" id="PF00607">
    <property type="entry name" value="Gag_p24"/>
    <property type="match status" value="1"/>
</dbReference>
<dbReference type="Pfam" id="PF19317">
    <property type="entry name" value="Gag_p24_C"/>
    <property type="match status" value="1"/>
</dbReference>
<dbReference type="Pfam" id="PF08705">
    <property type="entry name" value="Gag_p6"/>
    <property type="match status" value="1"/>
</dbReference>
<dbReference type="Pfam" id="PF00098">
    <property type="entry name" value="zf-CCHC"/>
    <property type="match status" value="2"/>
</dbReference>
<dbReference type="PRINTS" id="PR00234">
    <property type="entry name" value="HIV1MATRIX"/>
</dbReference>
<dbReference type="SMART" id="SM00343">
    <property type="entry name" value="ZnF_C2HC"/>
    <property type="match status" value="2"/>
</dbReference>
<dbReference type="SUPFAM" id="SSF47836">
    <property type="entry name" value="Retroviral matrix proteins"/>
    <property type="match status" value="1"/>
</dbReference>
<dbReference type="SUPFAM" id="SSF47353">
    <property type="entry name" value="Retrovirus capsid dimerization domain-like"/>
    <property type="match status" value="1"/>
</dbReference>
<dbReference type="SUPFAM" id="SSF47943">
    <property type="entry name" value="Retrovirus capsid protein, N-terminal core domain"/>
    <property type="match status" value="1"/>
</dbReference>
<dbReference type="SUPFAM" id="SSF57756">
    <property type="entry name" value="Retrovirus zinc finger-like domains"/>
    <property type="match status" value="1"/>
</dbReference>
<dbReference type="PROSITE" id="PS50158">
    <property type="entry name" value="ZF_CCHC"/>
    <property type="match status" value="2"/>
</dbReference>
<comment type="function">
    <molecule>Gag polyprotein</molecule>
    <text evidence="5">Mediates, with Gag-Pol polyprotein, the essential events in virion assembly, including binding the plasma membrane, making the protein-protein interactions necessary to create spherical particles, recruiting the viral Env proteins, and packaging the genomic RNA via direct interactions with the RNA packaging sequence (Psi).</text>
</comment>
<comment type="function">
    <molecule>Matrix protein p17</molecule>
    <text evidence="1 6">Targets the polyprotein to the plasma membrane via a multipartite membrane-binding signal, that includes its myristoylated N-terminus (By similarity). Matrix protein is part of the pre-integration complex. Implicated in the release from host cell mediated by Vpu. Binds to RNA (By similarity).</text>
</comment>
<comment type="function">
    <molecule>Capsid protein p24</molecule>
    <text evidence="5 6">Forms the conical core that encapsulates the genomic RNA-nucleocapsid complex in the virion. Most core are conical, with only 7% tubular. The core is constituted by capsid protein hexamer subunits. The core is disassembled soon after virion entry (By similarity). The capsid promotes immune invasion by cloaking viral DNA from CGAS detection (By similarity). Host restriction factors such as TRIM5-alpha or TRIMCyp bind retroviral capsids and cause premature capsid disassembly, leading to blocks in reverse transcription. Capsid restriction by TRIM5 is one of the factors which restricts HIV-1 to the human species. Host PIN1 apparently facilitates the virion uncoating (By similarity). On the other hand, interactions with PDZD8 or CYPA stabilize the capsid (By similarity).</text>
</comment>
<comment type="function">
    <molecule>Nucleocapsid protein p7</molecule>
    <text evidence="5">Encapsulates and protects viral dimeric unspliced genomic RNA (gRNA). Binds these RNAs through its zinc fingers. Acts as a nucleic acid chaperone which is involved in rearangement of nucleic acid secondary structure during gRNA retrotranscription. Also facilitates template switch leading to recombination. As part of the polyprotein, participates in gRNA dimerization, packaging, tRNA incorporation and virion assembly.</text>
</comment>
<comment type="function">
    <molecule>p6-gag</molecule>
    <text evidence="6">Plays a role in budding of the assembled particle by interacting with the host class E VPS proteins TSG101 and PDCD6IP/AIP1.</text>
</comment>
<comment type="subunit">
    <molecule>Gag polyprotein</molecule>
    <text evidence="4 5">Homotrimer; further assembles as hexamers of trimers. Oligomerization possibly creates a central hole into which the cytoplasmic tail of the gp41 envelope protein may be inserted. Interacts with host TRIM22; this interaction seems to disrupt proper trafficking of Gag polyprotein and may interfere with budding. Interacts with host PDZD8. When ubiquitinated, interacts (via p6-gag domain) with host PACSIN2; this interaction allows PACSIN2 recruitment to viral assembly sites and its subsequent incorporation into virions. Interacts with MOV10 (By similarity).</text>
</comment>
<comment type="subunit">
    <molecule>Matrix protein p17</molecule>
    <text evidence="5 6">Homotrimer; further assembles as hexamers of trimers. Interacts with gp41 (via C-terminus). Interacts with host CALM1; this interaction induces a conformational change in the Matrix protein, triggering exposure of the myristate group. Interacts with host AP3D1; this interaction allows the polyprotein trafficking to multivesicular bodies during virus assembly. Part of the pre-integration complex (PIC) which is composed of viral genome, matrix protein, Vpr and integrase.</text>
</comment>
<comment type="subunit">
    <molecule>Capsid protein p24</molecule>
    <text evidence="5 6">Homodimer; the homodimer further multimerizes as homohexamers or homopentamers (By similarity). Interacts with host NUP98 (By similarity). Interacts with host PPIA/CYPA; this interaction stabilizes the capsid (By similarity). Interacts with host NUP153 (By similarity). Interacts with host PDZD8; this interaction stabilizes the capsid. Interacts with host TRIM5; this interaction destabilizes the capsid (By similarity). Interacts with host CPSF6 (By similarity). Interacts with host NONO; the interaction is weak (By similarity).</text>
</comment>
<comment type="subunit">
    <molecule>Nucleocapsid protein p7</molecule>
    <text evidence="6">Interacts with host NUP98.</text>
</comment>
<comment type="subunit">
    <molecule>p6-gag</molecule>
    <text evidence="3 6">Interacts with Vpr; this interaction allows Vpr incorporation into the virion. Interacts with host TSG101. p6-gag interacts with host PDCD6IP/AIP1.</text>
</comment>
<comment type="subcellular location">
    <molecule>Gag polyprotein</molecule>
    <subcellularLocation>
        <location evidence="6">Host cell membrane</location>
        <topology evidence="6">Lipid-anchor</topology>
    </subcellularLocation>
    <subcellularLocation>
        <location evidence="6">Host endosome</location>
        <location evidence="6">Host multivesicular body</location>
    </subcellularLocation>
    <text evidence="6">These locations are probably linked to virus assembly sites. The main location is the cell membrane, but under some circumstances, late endosomal compartments can serve as productive sites for virion assembly.</text>
</comment>
<comment type="subcellular location">
    <molecule>Matrix protein p17</molecule>
    <subcellularLocation>
        <location evidence="6">Virion membrane</location>
        <topology evidence="6">Lipid-anchor</topology>
    </subcellularLocation>
    <subcellularLocation>
        <location evidence="1">Host nucleus</location>
    </subcellularLocation>
    <subcellularLocation>
        <location evidence="1">Host cytoplasm</location>
    </subcellularLocation>
</comment>
<comment type="subcellular location">
    <molecule>Capsid protein p24</molecule>
    <subcellularLocation>
        <location evidence="6">Virion</location>
    </subcellularLocation>
</comment>
<comment type="subcellular location">
    <molecule>Nucleocapsid protein p7</molecule>
    <subcellularLocation>
        <location evidence="6">Virion</location>
    </subcellularLocation>
</comment>
<comment type="alternative products">
    <event type="ribosomal frameshifting"/>
    <isoform>
        <id>Q75001-1</id>
        <name>Gag polyprotein</name>
        <sequence type="displayed"/>
    </isoform>
    <isoform>
        <id>Q75002-1</id>
        <name>Gag-Pol polyprotein</name>
        <sequence type="external"/>
    </isoform>
    <text>Translation results in the formation of the Gag polyprotein most of the time. Ribosomal frameshifting at the gag-pol genes boundary occurs at low frequency and produces the Gag-Pol polyprotein. This strategy of translation probably allows the virus to modulate the quantity of each viral protein. Maintenance of a correct Gag to Gag-Pol ratio is essential for RNA dimerization and viral infectivity.</text>
</comment>
<comment type="domain">
    <text evidence="6">Late-budding domains (L domains) are short sequence motifs essential for viral particle budding. They recruit proteins of the host ESCRT machinery (Endosomal Sorting Complex Required for Transport) or ESCRT-associated proteins. p6-gag contains two L domains: a PTAP/PSAP motif, which interacts with the UEV domain of TSG101 and a LYPX(n)L motif which interacts with PDCD6IP/AIP1.</text>
</comment>
<comment type="PTM">
    <text evidence="6">Gag-Pol polyprotein: Specific enzymatic cleavages by the viral protease yield mature proteins.</text>
</comment>
<comment type="PTM">
    <molecule>Matrix protein p17</molecule>
    <text evidence="5">Tyrosine phosphorylated presumably in the virion by a host kinase. Phosphorylation is apparently not a major regulator of membrane association.</text>
</comment>
<comment type="PTM">
    <text evidence="6">Capsid protein p24 is phosphorylated possibly by host MAPK1; this phosphorylation is necessary for Pin1-mediated virion uncoating.</text>
</comment>
<comment type="PTM">
    <text evidence="2">Nucleocapsid protein p7 is methylated by host PRMT6, impairing its function by reducing RNA annealing and the initiation of reverse transcription.</text>
</comment>
<comment type="miscellaneous">
    <text>HIV-1 lineages are divided in three main groups, M (for Major), O (for Outlier), and N (for New, or Non-M, Non-O). The vast majority of strains found worldwide belong to the group M. Group O seems to be endemic to and largely confined to Cameroon and neighboring countries in West Central Africa, where these viruses represent a small minority of HIV-1 strains. The group N is represented by a limited number of isolates from Cameroonian persons. The group M is further subdivided in 9 clades or subtypes (A to D, F to H, J and K).</text>
</comment>
<comment type="miscellaneous">
    <molecule>Isoform Gag polyprotein</molecule>
    <text>Produced by conventional translation.</text>
</comment>
<comment type="similarity">
    <text evidence="10">Belongs to the primate lentivirus group gag polyprotein family.</text>
</comment>
<feature type="initiator methionine" description="Removed; by host" evidence="1">
    <location>
        <position position="1"/>
    </location>
</feature>
<feature type="chain" id="PRO_0000261215" description="Gag polyprotein">
    <location>
        <begin position="2"/>
        <end position="504"/>
    </location>
</feature>
<feature type="chain" id="PRO_0000246368" description="Matrix protein p17" evidence="1">
    <location>
        <begin position="2"/>
        <end position="130"/>
    </location>
</feature>
<feature type="chain" id="PRO_0000246369" description="Capsid protein p24" evidence="1">
    <location>
        <begin position="131"/>
        <end position="361"/>
    </location>
</feature>
<feature type="peptide" id="PRO_0000246370" description="Spacer peptide 1" evidence="1">
    <location>
        <begin position="362"/>
        <end position="374"/>
    </location>
</feature>
<feature type="chain" id="PRO_0000246371" description="Nucleocapsid protein p7" evidence="1">
    <location>
        <begin position="375"/>
        <end position="429"/>
    </location>
</feature>
<feature type="peptide" id="PRO_0000246372" description="Spacer peptide 2" evidence="1">
    <location>
        <begin position="430"/>
        <end position="445"/>
    </location>
</feature>
<feature type="chain" id="PRO_0000246373" description="p6-gag" evidence="1">
    <location>
        <begin position="446"/>
        <end position="504"/>
    </location>
</feature>
<feature type="zinc finger region" description="CCHC-type 1" evidence="8">
    <location>
        <begin position="387"/>
        <end position="404"/>
    </location>
</feature>
<feature type="zinc finger region" description="CCHC-type 2" evidence="8">
    <location>
        <begin position="408"/>
        <end position="425"/>
    </location>
</feature>
<feature type="region of interest" description="Interaction with Gp41" evidence="6">
    <location>
        <begin position="7"/>
        <end position="31"/>
    </location>
</feature>
<feature type="region of interest" description="Interaction with host CALM1" evidence="5">
    <location>
        <begin position="8"/>
        <end position="43"/>
    </location>
</feature>
<feature type="region of interest" description="Interaction with host AP3D1" evidence="7">
    <location>
        <begin position="12"/>
        <end position="19"/>
    </location>
</feature>
<feature type="region of interest" description="Interaction with membrane phosphatidylinositol 4,5-bisphosphate and RNA" evidence="6">
    <location>
        <begin position="14"/>
        <end position="33"/>
    </location>
</feature>
<feature type="region of interest" description="Interaction with membrane phosphatidylinositol 4,5-bisphosphate" evidence="6">
    <location>
        <begin position="73"/>
        <end position="77"/>
    </location>
</feature>
<feature type="region of interest" description="Disordered" evidence="9">
    <location>
        <begin position="105"/>
        <end position="128"/>
    </location>
</feature>
<feature type="region of interest" description="Interaction with host PPIA/CYPA and NUP153" evidence="6">
    <location>
        <begin position="187"/>
        <end position="225"/>
    </location>
</feature>
<feature type="region of interest" description="PPIA/CYPA-binding loop" evidence="5">
    <location>
        <begin position="215"/>
        <end position="223"/>
    </location>
</feature>
<feature type="region of interest" description="Dimerization/Multimerization of capsid protein p24" evidence="5">
    <location>
        <begin position="275"/>
        <end position="361"/>
    </location>
</feature>
<feature type="region of interest" description="Disordered" evidence="9">
    <location>
        <begin position="434"/>
        <end position="486"/>
    </location>
</feature>
<feature type="short sequence motif" description="Nuclear export signal" evidence="1">
    <location>
        <begin position="16"/>
        <end position="22"/>
    </location>
</feature>
<feature type="short sequence motif" description="Nuclear localization signal" evidence="1">
    <location>
        <begin position="26"/>
        <end position="32"/>
    </location>
</feature>
<feature type="short sequence motif" description="PTAP/PSAP motif">
    <location>
        <begin position="452"/>
        <end position="455"/>
    </location>
</feature>
<feature type="short sequence motif" description="PTAP/PSAP motif">
    <location>
        <begin position="463"/>
        <end position="466"/>
    </location>
</feature>
<feature type="site" description="Cleavage; by viral protease" evidence="1">
    <location>
        <begin position="130"/>
        <end position="131"/>
    </location>
</feature>
<feature type="site" description="Cleavage; by viral protease" evidence="1">
    <location>
        <begin position="361"/>
        <end position="362"/>
    </location>
</feature>
<feature type="site" description="Cleavage; by viral protease" evidence="1">
    <location>
        <begin position="374"/>
        <end position="375"/>
    </location>
</feature>
<feature type="site" description="Cleavage; by viral protease" evidence="1">
    <location>
        <begin position="429"/>
        <end position="430"/>
    </location>
</feature>
<feature type="site" description="Cleavage; by viral protease" evidence="1">
    <location>
        <begin position="445"/>
        <end position="446"/>
    </location>
</feature>
<feature type="modified residue" description="Phosphoserine; by host MAPK1" evidence="6">
    <location>
        <position position="146"/>
    </location>
</feature>
<feature type="modified residue" description="Asymmetric dimethylarginine; in Nucleocapsid protein p7; by host PRMT6" evidence="1">
    <location>
        <position position="406"/>
    </location>
</feature>
<feature type="lipid moiety-binding region" description="N-myristoyl glycine; by host" evidence="1">
    <location>
        <position position="2"/>
    </location>
</feature>
<keyword id="KW-0014">AIDS</keyword>
<keyword id="KW-0167">Capsid protein</keyword>
<keyword id="KW-1032">Host cell membrane</keyword>
<keyword id="KW-1035">Host cytoplasm</keyword>
<keyword id="KW-1039">Host endosome</keyword>
<keyword id="KW-1043">Host membrane</keyword>
<keyword id="KW-1048">Host nucleus</keyword>
<keyword id="KW-0945">Host-virus interaction</keyword>
<keyword id="KW-0449">Lipoprotein</keyword>
<keyword id="KW-0472">Membrane</keyword>
<keyword id="KW-0479">Metal-binding</keyword>
<keyword id="KW-0488">Methylation</keyword>
<keyword id="KW-0519">Myristate</keyword>
<keyword id="KW-0597">Phosphoprotein</keyword>
<keyword id="KW-1185">Reference proteome</keyword>
<keyword id="KW-0677">Repeat</keyword>
<keyword id="KW-0688">Ribosomal frameshifting</keyword>
<keyword id="KW-0694">RNA-binding</keyword>
<keyword id="KW-1198">Viral budding</keyword>
<keyword id="KW-1187">Viral budding via the host ESCRT complexes</keyword>
<keyword id="KW-0543">Viral nucleoprotein</keyword>
<keyword id="KW-1188">Viral release from host cell</keyword>
<keyword id="KW-0946">Virion</keyword>
<keyword id="KW-0862">Zinc</keyword>
<keyword id="KW-0863">Zinc-finger</keyword>
<sequence>MGARASILRGEKLDAWEKIKLRPGGKKHYMLKHLVWANRELEKFALNPDLLDTSAGCKQIIKQLQPALQTGTEELKSLFNTVATLYCVHQKIEIKDTKEALDKIEEEQNESQQKTQQAGAADRGKDSQNYPIVQNMQGQMVHQPISARTLNAWVKVVEEKAFSPEVIPMFTALSEGATPQDLNTMLNTVGGHQAAMQMLKDTINEEAAEWDRLHPVHAGPVAPGQMRDPRGSDIAGTTSTLQEQIAWMTGNPPVPVGDIYKRWIILGLNKIVRMYSPVSILDIKQGPKEPFRDYVDRFFKTLRAEQATQDVKNWMTDTLLVQNANPDCKTILRALGPGASLEEMMTACQGVGGPAHKARVLAEAMSQVNNTTIMMQKSNFKGPKRAIKCFNCGKEGHLARNCRAPRKKGCWKCGKEGHQMKDCTERQANFLGRLWPSNKGRPGNFLQSRPEPTAPPESLRPEPTAPPPESFRFEEATPSPKQELKDREALTSLKSLFGNDHLLQ</sequence>
<proteinExistence type="inferred from homology"/>
<accession>Q75001</accession>
<name>GAG_HV1ET</name>
<protein>
    <recommendedName>
        <fullName>Gag polyprotein</fullName>
    </recommendedName>
    <alternativeName>
        <fullName>Pr55Gag</fullName>
    </alternativeName>
    <component>
        <recommendedName>
            <fullName>Matrix protein p17</fullName>
            <shortName>MA</shortName>
        </recommendedName>
    </component>
    <component>
        <recommendedName>
            <fullName>Capsid protein p24</fullName>
            <shortName>CA</shortName>
        </recommendedName>
    </component>
    <component>
        <recommendedName>
            <fullName evidence="6">Spacer peptide 1</fullName>
            <shortName>SP1</shortName>
        </recommendedName>
        <alternativeName>
            <fullName>p2</fullName>
        </alternativeName>
    </component>
    <component>
        <recommendedName>
            <fullName>Nucleocapsid protein p7</fullName>
            <shortName>NC</shortName>
        </recommendedName>
    </component>
    <component>
        <recommendedName>
            <fullName evidence="6">Spacer peptide 2</fullName>
            <shortName>SP2</shortName>
        </recommendedName>
        <alternativeName>
            <fullName>p1</fullName>
        </alternativeName>
    </component>
    <component>
        <recommendedName>
            <fullName>p6-gag</fullName>
        </recommendedName>
    </component>
</protein>
<evidence type="ECO:0000250" key="1"/>
<evidence type="ECO:0000250" key="2">
    <source>
        <dbReference type="UniProtKB" id="P03347"/>
    </source>
</evidence>
<evidence type="ECO:0000250" key="3">
    <source>
        <dbReference type="UniProtKB" id="P03348"/>
    </source>
</evidence>
<evidence type="ECO:0000250" key="4">
    <source>
        <dbReference type="UniProtKB" id="P03349"/>
    </source>
</evidence>
<evidence type="ECO:0000250" key="5">
    <source>
        <dbReference type="UniProtKB" id="P04591"/>
    </source>
</evidence>
<evidence type="ECO:0000250" key="6">
    <source>
        <dbReference type="UniProtKB" id="P12493"/>
    </source>
</evidence>
<evidence type="ECO:0000250" key="7">
    <source>
        <dbReference type="UniProtKB" id="P12497"/>
    </source>
</evidence>
<evidence type="ECO:0000255" key="8">
    <source>
        <dbReference type="PROSITE-ProRule" id="PRU00047"/>
    </source>
</evidence>
<evidence type="ECO:0000256" key="9">
    <source>
        <dbReference type="SAM" id="MobiDB-lite"/>
    </source>
</evidence>
<evidence type="ECO:0000305" key="10"/>
<organism>
    <name type="scientific">Human immunodeficiency virus type 1 group M subtype C (isolate ETH2220)</name>
    <name type="common">HIV-1</name>
    <dbReference type="NCBI Taxonomy" id="388796"/>
    <lineage>
        <taxon>Viruses</taxon>
        <taxon>Riboviria</taxon>
        <taxon>Pararnavirae</taxon>
        <taxon>Artverviricota</taxon>
        <taxon>Revtraviricetes</taxon>
        <taxon>Ortervirales</taxon>
        <taxon>Retroviridae</taxon>
        <taxon>Orthoretrovirinae</taxon>
        <taxon>Lentivirus</taxon>
        <taxon>Human immunodeficiency virus type 1</taxon>
    </lineage>
</organism>